<protein>
    <recommendedName>
        <fullName evidence="1">Holo-[acyl-carrier-protein] synthase</fullName>
        <shortName evidence="1">Holo-ACP synthase</shortName>
        <ecNumber evidence="1">2.7.8.7</ecNumber>
    </recommendedName>
    <alternativeName>
        <fullName evidence="1">4'-phosphopantetheinyl transferase AcpS</fullName>
    </alternativeName>
</protein>
<organism>
    <name type="scientific">Methylorubrum populi (strain ATCC BAA-705 / NCIMB 13946 / BJ001)</name>
    <name type="common">Methylobacterium populi</name>
    <dbReference type="NCBI Taxonomy" id="441620"/>
    <lineage>
        <taxon>Bacteria</taxon>
        <taxon>Pseudomonadati</taxon>
        <taxon>Pseudomonadota</taxon>
        <taxon>Alphaproteobacteria</taxon>
        <taxon>Hyphomicrobiales</taxon>
        <taxon>Methylobacteriaceae</taxon>
        <taxon>Methylorubrum</taxon>
    </lineage>
</organism>
<sequence>MILGIGTDLCDIRRIENSLERFGERFTHRVFTDGEREKCDRRAARGPSYARRFAAKEACAKALGTGMSQGVFWRDMEVINAASGQPTLRLTGGAREHLARMVPPGHEARLHVTLTDEPPLAQAFVIIEAVPVAGAS</sequence>
<keyword id="KW-0963">Cytoplasm</keyword>
<keyword id="KW-0275">Fatty acid biosynthesis</keyword>
<keyword id="KW-0276">Fatty acid metabolism</keyword>
<keyword id="KW-0444">Lipid biosynthesis</keyword>
<keyword id="KW-0443">Lipid metabolism</keyword>
<keyword id="KW-0460">Magnesium</keyword>
<keyword id="KW-0479">Metal-binding</keyword>
<keyword id="KW-0808">Transferase</keyword>
<proteinExistence type="inferred from homology"/>
<evidence type="ECO:0000255" key="1">
    <source>
        <dbReference type="HAMAP-Rule" id="MF_00101"/>
    </source>
</evidence>
<reference key="1">
    <citation type="submission" date="2008-04" db="EMBL/GenBank/DDBJ databases">
        <title>Complete sequence of chromosome of Methylobacterium populi BJ001.</title>
        <authorList>
            <consortium name="US DOE Joint Genome Institute"/>
            <person name="Copeland A."/>
            <person name="Lucas S."/>
            <person name="Lapidus A."/>
            <person name="Glavina del Rio T."/>
            <person name="Dalin E."/>
            <person name="Tice H."/>
            <person name="Bruce D."/>
            <person name="Goodwin L."/>
            <person name="Pitluck S."/>
            <person name="Chertkov O."/>
            <person name="Brettin T."/>
            <person name="Detter J.C."/>
            <person name="Han C."/>
            <person name="Kuske C.R."/>
            <person name="Schmutz J."/>
            <person name="Larimer F."/>
            <person name="Land M."/>
            <person name="Hauser L."/>
            <person name="Kyrpides N."/>
            <person name="Mikhailova N."/>
            <person name="Marx C."/>
            <person name="Richardson P."/>
        </authorList>
    </citation>
    <scope>NUCLEOTIDE SEQUENCE [LARGE SCALE GENOMIC DNA]</scope>
    <source>
        <strain>ATCC BAA-705 / NCIMB 13946 / BJ001</strain>
    </source>
</reference>
<comment type="function">
    <text evidence="1">Transfers the 4'-phosphopantetheine moiety from coenzyme A to a Ser of acyl-carrier-protein.</text>
</comment>
<comment type="catalytic activity">
    <reaction evidence="1">
        <text>apo-[ACP] + CoA = holo-[ACP] + adenosine 3',5'-bisphosphate + H(+)</text>
        <dbReference type="Rhea" id="RHEA:12068"/>
        <dbReference type="Rhea" id="RHEA-COMP:9685"/>
        <dbReference type="Rhea" id="RHEA-COMP:9690"/>
        <dbReference type="ChEBI" id="CHEBI:15378"/>
        <dbReference type="ChEBI" id="CHEBI:29999"/>
        <dbReference type="ChEBI" id="CHEBI:57287"/>
        <dbReference type="ChEBI" id="CHEBI:58343"/>
        <dbReference type="ChEBI" id="CHEBI:64479"/>
        <dbReference type="EC" id="2.7.8.7"/>
    </reaction>
</comment>
<comment type="cofactor">
    <cofactor evidence="1">
        <name>Mg(2+)</name>
        <dbReference type="ChEBI" id="CHEBI:18420"/>
    </cofactor>
</comment>
<comment type="subcellular location">
    <subcellularLocation>
        <location evidence="1">Cytoplasm</location>
    </subcellularLocation>
</comment>
<comment type="similarity">
    <text evidence="1">Belongs to the P-Pant transferase superfamily. AcpS family.</text>
</comment>
<feature type="chain" id="PRO_1000093894" description="Holo-[acyl-carrier-protein] synthase">
    <location>
        <begin position="1"/>
        <end position="136"/>
    </location>
</feature>
<feature type="binding site" evidence="1">
    <location>
        <position position="8"/>
    </location>
    <ligand>
        <name>Mg(2+)</name>
        <dbReference type="ChEBI" id="CHEBI:18420"/>
    </ligand>
</feature>
<feature type="binding site" evidence="1">
    <location>
        <position position="57"/>
    </location>
    <ligand>
        <name>Mg(2+)</name>
        <dbReference type="ChEBI" id="CHEBI:18420"/>
    </ligand>
</feature>
<name>ACPS_METPB</name>
<accession>B1Z872</accession>
<dbReference type="EC" id="2.7.8.7" evidence="1"/>
<dbReference type="EMBL" id="CP001029">
    <property type="protein sequence ID" value="ACB80392.1"/>
    <property type="molecule type" value="Genomic_DNA"/>
</dbReference>
<dbReference type="RefSeq" id="WP_012454126.1">
    <property type="nucleotide sequence ID" value="NC_010725.1"/>
</dbReference>
<dbReference type="SMR" id="B1Z872"/>
<dbReference type="STRING" id="441620.Mpop_2230"/>
<dbReference type="KEGG" id="mpo:Mpop_2230"/>
<dbReference type="eggNOG" id="COG0736">
    <property type="taxonomic scope" value="Bacteria"/>
</dbReference>
<dbReference type="HOGENOM" id="CLU_089696_0_2_5"/>
<dbReference type="OrthoDB" id="517356at2"/>
<dbReference type="Proteomes" id="UP000007136">
    <property type="component" value="Chromosome"/>
</dbReference>
<dbReference type="GO" id="GO:0005737">
    <property type="term" value="C:cytoplasm"/>
    <property type="evidence" value="ECO:0007669"/>
    <property type="project" value="UniProtKB-SubCell"/>
</dbReference>
<dbReference type="GO" id="GO:0008897">
    <property type="term" value="F:holo-[acyl-carrier-protein] synthase activity"/>
    <property type="evidence" value="ECO:0007669"/>
    <property type="project" value="UniProtKB-UniRule"/>
</dbReference>
<dbReference type="GO" id="GO:0000287">
    <property type="term" value="F:magnesium ion binding"/>
    <property type="evidence" value="ECO:0007669"/>
    <property type="project" value="UniProtKB-UniRule"/>
</dbReference>
<dbReference type="GO" id="GO:0006633">
    <property type="term" value="P:fatty acid biosynthetic process"/>
    <property type="evidence" value="ECO:0007669"/>
    <property type="project" value="UniProtKB-UniRule"/>
</dbReference>
<dbReference type="Gene3D" id="3.90.470.20">
    <property type="entry name" value="4'-phosphopantetheinyl transferase domain"/>
    <property type="match status" value="1"/>
</dbReference>
<dbReference type="HAMAP" id="MF_00101">
    <property type="entry name" value="AcpS"/>
    <property type="match status" value="1"/>
</dbReference>
<dbReference type="InterPro" id="IPR008278">
    <property type="entry name" value="4-PPantetheinyl_Trfase_dom"/>
</dbReference>
<dbReference type="InterPro" id="IPR037143">
    <property type="entry name" value="4-PPantetheinyl_Trfase_dom_sf"/>
</dbReference>
<dbReference type="InterPro" id="IPR002582">
    <property type="entry name" value="ACPS"/>
</dbReference>
<dbReference type="InterPro" id="IPR004568">
    <property type="entry name" value="Ppantetheine-prot_Trfase_dom"/>
</dbReference>
<dbReference type="NCBIfam" id="TIGR00516">
    <property type="entry name" value="acpS"/>
    <property type="match status" value="1"/>
</dbReference>
<dbReference type="NCBIfam" id="TIGR00556">
    <property type="entry name" value="pantethn_trn"/>
    <property type="match status" value="1"/>
</dbReference>
<dbReference type="Pfam" id="PF01648">
    <property type="entry name" value="ACPS"/>
    <property type="match status" value="1"/>
</dbReference>
<dbReference type="SUPFAM" id="SSF56214">
    <property type="entry name" value="4'-phosphopantetheinyl transferase"/>
    <property type="match status" value="1"/>
</dbReference>
<gene>
    <name evidence="1" type="primary">acpS</name>
    <name type="ordered locus">Mpop_2230</name>
</gene>